<name>SYF1_YEAST</name>
<organism>
    <name type="scientific">Saccharomyces cerevisiae (strain ATCC 204508 / S288c)</name>
    <name type="common">Baker's yeast</name>
    <dbReference type="NCBI Taxonomy" id="559292"/>
    <lineage>
        <taxon>Eukaryota</taxon>
        <taxon>Fungi</taxon>
        <taxon>Dikarya</taxon>
        <taxon>Ascomycota</taxon>
        <taxon>Saccharomycotina</taxon>
        <taxon>Saccharomycetes</taxon>
        <taxon>Saccharomycetales</taxon>
        <taxon>Saccharomycetaceae</taxon>
        <taxon>Saccharomyces</taxon>
    </lineage>
</organism>
<accession>Q04048</accession>
<accession>D6VT47</accession>
<sequence>MSAYIAMKGVITNVDENIRNDEDVAFEYEIQKTPQNILTWKRYIEYWKEEGRTDKQIRWLYERFCSQFVTDTSIWEDYIRWESTKEVVETSRIFWLFQRCLKSCVRDCDRICLSYLELAIEQYDLAMIRHALASSLMKMEREMHRKVWDPVIKFVEEKVLPLTQLDSTQEDEEESTDEAELINVLLVKGFTKGGFISEEISENGSRGDIWSSHILERYLKVAPQQKRNESLATLALTRDNITIKSVYEKYLPQDENSGKYLPSSELPFELNFNYLASLEKLGLDNQYEEFMRQMNGIYPDKWLFLILSLAKYYISRGRLDSCGDLLKKSLQQTLRYSDFDRIYNFYLLFEQECSQFILGKLKENDSKFFNQKDWTEKLQAHMATFESLINLYDIYLNDVALRQDSNLVETWMKRVSLQKSAAEKCNVYSEAILKIDPRKVGTPGSFGRLWCSYGDLYWRSNAISTARELWTQSLKVPYPYIEDLEEIYLNWADRELDKEGVERAFSILEDALHVPTNPEILLEKYKNGHRKIPAQTVLFNSLRIWSKYIDYLEAYCPKDANSSDKIFNKTKMAYNTVIDLRLITPAMAENFALFLQNHYEVMESFQVYEKTIPLFPPEIQYELWIEYLEVATSHQLSSLSPEHIRFLFEKALKNLCSNGIDCKTIFIAYSVFEERISGLISKSIEILRRGAVIGTVSVSTHLESRLQLWRMCISKAESTLGPSVTRELYQECIQILPNSKAVEFVIKFSDFESSIGETIRAREILAYGAKLLPPSRNTELWDSFEIFELKHGDKETYKDMLKMKKVLESNMLIDSASVSHEEGNINFVAAATSHAPNSHTLTQSTSSYSINPDEIELDI</sequence>
<evidence type="ECO:0000269" key="1">
    <source>
    </source>
</evidence>
<evidence type="ECO:0000269" key="2">
    <source>
    </source>
</evidence>
<evidence type="ECO:0000269" key="3">
    <source>
    </source>
</evidence>
<evidence type="ECO:0000269" key="4">
    <source>
    </source>
</evidence>
<evidence type="ECO:0000269" key="5">
    <source>
    </source>
</evidence>
<evidence type="ECO:0000269" key="6">
    <source>
    </source>
</evidence>
<evidence type="ECO:0000269" key="7">
    <source>
    </source>
</evidence>
<evidence type="ECO:0000305" key="8"/>
<evidence type="ECO:0007829" key="9">
    <source>
        <dbReference type="PDB" id="6J6G"/>
    </source>
</evidence>
<evidence type="ECO:0007829" key="10">
    <source>
        <dbReference type="PDB" id="9DTR"/>
    </source>
</evidence>
<proteinExistence type="evidence at protein level"/>
<dbReference type="EMBL" id="U33007">
    <property type="protein sequence ID" value="AAB64862.1"/>
    <property type="molecule type" value="Genomic_DNA"/>
</dbReference>
<dbReference type="EMBL" id="BK006938">
    <property type="protein sequence ID" value="DAA12257.1"/>
    <property type="molecule type" value="Genomic_DNA"/>
</dbReference>
<dbReference type="PIR" id="S69700">
    <property type="entry name" value="S69700"/>
</dbReference>
<dbReference type="RefSeq" id="NP_010704.1">
    <property type="nucleotide sequence ID" value="NM_001180724.1"/>
</dbReference>
<dbReference type="PDB" id="5GM6">
    <property type="method" value="EM"/>
    <property type="resolution" value="3.50 A"/>
    <property type="chains" value="v=569-734"/>
</dbReference>
<dbReference type="PDB" id="5GMK">
    <property type="method" value="EM"/>
    <property type="resolution" value="3.40 A"/>
    <property type="chains" value="v=569-734"/>
</dbReference>
<dbReference type="PDB" id="5LJ3">
    <property type="method" value="EM"/>
    <property type="resolution" value="3.80 A"/>
    <property type="chains" value="T=1-859"/>
</dbReference>
<dbReference type="PDB" id="5LJ5">
    <property type="method" value="EM"/>
    <property type="resolution" value="3.80 A"/>
    <property type="chains" value="T=1-859"/>
</dbReference>
<dbReference type="PDB" id="5LQW">
    <property type="method" value="EM"/>
    <property type="resolution" value="5.80 A"/>
    <property type="chains" value="P=1-859"/>
</dbReference>
<dbReference type="PDB" id="5MPS">
    <property type="method" value="EM"/>
    <property type="resolution" value="3.85 A"/>
    <property type="chains" value="T=1-859"/>
</dbReference>
<dbReference type="PDB" id="5MQ0">
    <property type="method" value="EM"/>
    <property type="resolution" value="4.17 A"/>
    <property type="chains" value="T=1-859"/>
</dbReference>
<dbReference type="PDB" id="5WSG">
    <property type="method" value="EM"/>
    <property type="resolution" value="4.00 A"/>
    <property type="chains" value="v=569-734"/>
</dbReference>
<dbReference type="PDB" id="5Y88">
    <property type="method" value="EM"/>
    <property type="resolution" value="3.70 A"/>
    <property type="chains" value="H=1-859"/>
</dbReference>
<dbReference type="PDB" id="5YLZ">
    <property type="method" value="EM"/>
    <property type="resolution" value="3.60 A"/>
    <property type="chains" value="H=1-859"/>
</dbReference>
<dbReference type="PDB" id="6BK8">
    <property type="method" value="EM"/>
    <property type="resolution" value="3.30 A"/>
    <property type="chains" value="U=1-859"/>
</dbReference>
<dbReference type="PDB" id="6EXN">
    <property type="method" value="EM"/>
    <property type="resolution" value="3.70 A"/>
    <property type="chains" value="T=1-859"/>
</dbReference>
<dbReference type="PDB" id="6J6G">
    <property type="method" value="EM"/>
    <property type="resolution" value="3.20 A"/>
    <property type="chains" value="v=1-859"/>
</dbReference>
<dbReference type="PDB" id="6J6H">
    <property type="method" value="EM"/>
    <property type="resolution" value="3.60 A"/>
    <property type="chains" value="v=1-859"/>
</dbReference>
<dbReference type="PDB" id="6J6N">
    <property type="method" value="EM"/>
    <property type="resolution" value="3.86 A"/>
    <property type="chains" value="v=1-859"/>
</dbReference>
<dbReference type="PDB" id="6J6Q">
    <property type="method" value="EM"/>
    <property type="resolution" value="3.70 A"/>
    <property type="chains" value="v=1-859"/>
</dbReference>
<dbReference type="PDB" id="9DTR">
    <property type="method" value="EM"/>
    <property type="resolution" value="2.31 A"/>
    <property type="chains" value="T=1-859"/>
</dbReference>
<dbReference type="PDBsum" id="5GM6"/>
<dbReference type="PDBsum" id="5GMK"/>
<dbReference type="PDBsum" id="5LJ3"/>
<dbReference type="PDBsum" id="5LJ5"/>
<dbReference type="PDBsum" id="5LQW"/>
<dbReference type="PDBsum" id="5MPS"/>
<dbReference type="PDBsum" id="5MQ0"/>
<dbReference type="PDBsum" id="5WSG"/>
<dbReference type="PDBsum" id="5Y88"/>
<dbReference type="PDBsum" id="5YLZ"/>
<dbReference type="PDBsum" id="6BK8"/>
<dbReference type="PDBsum" id="6EXN"/>
<dbReference type="PDBsum" id="6J6G"/>
<dbReference type="PDBsum" id="6J6H"/>
<dbReference type="PDBsum" id="6J6N"/>
<dbReference type="PDBsum" id="6J6Q"/>
<dbReference type="PDBsum" id="9DTR"/>
<dbReference type="EMDB" id="EMD-0686"/>
<dbReference type="EMDB" id="EMD-0687"/>
<dbReference type="EMDB" id="EMD-0691"/>
<dbReference type="EMDB" id="EMD-0692"/>
<dbReference type="EMDB" id="EMD-3539"/>
<dbReference type="EMDB" id="EMD-3541"/>
<dbReference type="EMDB" id="EMD-3979"/>
<dbReference type="EMDB" id="EMD-4057"/>
<dbReference type="EMDB" id="EMD-47157"/>
<dbReference type="EMDB" id="EMD-6817"/>
<dbReference type="EMDB" id="EMD-6839"/>
<dbReference type="EMDB" id="EMD-7109"/>
<dbReference type="EMDB" id="EMD-9524"/>
<dbReference type="EMDB" id="EMD-9525"/>
<dbReference type="SMR" id="Q04048"/>
<dbReference type="BioGRID" id="32475">
    <property type="interactions" value="266"/>
</dbReference>
<dbReference type="ComplexPortal" id="CPX-1651">
    <property type="entry name" value="PRP19-associated complex"/>
</dbReference>
<dbReference type="ComplexPortal" id="CPX-1885">
    <property type="entry name" value="NineTeen complex"/>
</dbReference>
<dbReference type="DIP" id="DIP-1681N"/>
<dbReference type="FunCoup" id="Q04048">
    <property type="interactions" value="1255"/>
</dbReference>
<dbReference type="IntAct" id="Q04048">
    <property type="interactions" value="56"/>
</dbReference>
<dbReference type="MINT" id="Q04048"/>
<dbReference type="STRING" id="4932.YDR416W"/>
<dbReference type="iPTMnet" id="Q04048"/>
<dbReference type="PaxDb" id="4932-YDR416W"/>
<dbReference type="PeptideAtlas" id="Q04048"/>
<dbReference type="EnsemblFungi" id="YDR416W_mRNA">
    <property type="protein sequence ID" value="YDR416W"/>
    <property type="gene ID" value="YDR416W"/>
</dbReference>
<dbReference type="GeneID" id="852025"/>
<dbReference type="KEGG" id="sce:YDR416W"/>
<dbReference type="AGR" id="SGD:S000002824"/>
<dbReference type="SGD" id="S000002824">
    <property type="gene designation" value="SYF1"/>
</dbReference>
<dbReference type="VEuPathDB" id="FungiDB:YDR416W"/>
<dbReference type="eggNOG" id="KOG2047">
    <property type="taxonomic scope" value="Eukaryota"/>
</dbReference>
<dbReference type="GeneTree" id="ENSGT00940000175925"/>
<dbReference type="HOGENOM" id="CLU_007736_0_0_1"/>
<dbReference type="InParanoid" id="Q04048"/>
<dbReference type="OMA" id="IWYNYLR"/>
<dbReference type="OrthoDB" id="10067343at2759"/>
<dbReference type="BioCyc" id="YEAST:G3O-29958-MONOMER"/>
<dbReference type="Reactome" id="R-SCE-6781823">
    <property type="pathway name" value="Formation of TC-NER Pre-Incision Complex"/>
</dbReference>
<dbReference type="Reactome" id="R-SCE-6782135">
    <property type="pathway name" value="Dual incision in TC-NER"/>
</dbReference>
<dbReference type="Reactome" id="R-SCE-6782210">
    <property type="pathway name" value="Gap-filling DNA repair synthesis and ligation in TC-NER"/>
</dbReference>
<dbReference type="BioGRID-ORCS" id="852025">
    <property type="hits" value="1 hit in 10 CRISPR screens"/>
</dbReference>
<dbReference type="PRO" id="PR:Q04048"/>
<dbReference type="Proteomes" id="UP000002311">
    <property type="component" value="Chromosome IV"/>
</dbReference>
<dbReference type="RNAct" id="Q04048">
    <property type="molecule type" value="protein"/>
</dbReference>
<dbReference type="GO" id="GO:0005829">
    <property type="term" value="C:cytosol"/>
    <property type="evidence" value="ECO:0000314"/>
    <property type="project" value="SGD"/>
</dbReference>
<dbReference type="GO" id="GO:0005634">
    <property type="term" value="C:nucleus"/>
    <property type="evidence" value="ECO:0000314"/>
    <property type="project" value="SGD"/>
</dbReference>
<dbReference type="GO" id="GO:0071014">
    <property type="term" value="C:post-mRNA release spliceosomal complex"/>
    <property type="evidence" value="ECO:0000318"/>
    <property type="project" value="GO_Central"/>
</dbReference>
<dbReference type="GO" id="GO:0000974">
    <property type="term" value="C:Prp19 complex"/>
    <property type="evidence" value="ECO:0000314"/>
    <property type="project" value="SGD"/>
</dbReference>
<dbReference type="GO" id="GO:0071006">
    <property type="term" value="C:U2-type catalytic step 1 spliceosome"/>
    <property type="evidence" value="ECO:0000314"/>
    <property type="project" value="SGD"/>
</dbReference>
<dbReference type="GO" id="GO:0071007">
    <property type="term" value="C:U2-type catalytic step 2 spliceosome"/>
    <property type="evidence" value="ECO:0000314"/>
    <property type="project" value="SGD"/>
</dbReference>
<dbReference type="GO" id="GO:0071008">
    <property type="term" value="C:U2-type post-mRNA release spliceosomal complex"/>
    <property type="evidence" value="ECO:0000314"/>
    <property type="project" value="SGD"/>
</dbReference>
<dbReference type="GO" id="GO:0071004">
    <property type="term" value="C:U2-type prespliceosome"/>
    <property type="evidence" value="ECO:0000314"/>
    <property type="project" value="SGD"/>
</dbReference>
<dbReference type="GO" id="GO:0000349">
    <property type="term" value="P:generation of catalytic spliceosome for first transesterification step"/>
    <property type="evidence" value="ECO:0000314"/>
    <property type="project" value="SGD"/>
</dbReference>
<dbReference type="GO" id="GO:0000398">
    <property type="term" value="P:mRNA splicing, via spliceosome"/>
    <property type="evidence" value="ECO:0000318"/>
    <property type="project" value="GO_Central"/>
</dbReference>
<dbReference type="FunFam" id="1.25.40.10:FF:001150">
    <property type="entry name" value="Pre-mRNA-splicing factor SYF1"/>
    <property type="match status" value="1"/>
</dbReference>
<dbReference type="Gene3D" id="1.25.40.10">
    <property type="entry name" value="Tetratricopeptide repeat domain"/>
    <property type="match status" value="3"/>
</dbReference>
<dbReference type="InterPro" id="IPR003107">
    <property type="entry name" value="HAT"/>
</dbReference>
<dbReference type="InterPro" id="IPR055433">
    <property type="entry name" value="HAT_Syf1-like_N"/>
</dbReference>
<dbReference type="InterPro" id="IPR056350">
    <property type="entry name" value="HAT_Syf1_central"/>
</dbReference>
<dbReference type="InterPro" id="IPR055430">
    <property type="entry name" value="HAT_Syf1_CNRKL1_C"/>
</dbReference>
<dbReference type="InterPro" id="IPR045075">
    <property type="entry name" value="Syf1-like"/>
</dbReference>
<dbReference type="InterPro" id="IPR011990">
    <property type="entry name" value="TPR-like_helical_dom_sf"/>
</dbReference>
<dbReference type="PANTHER" id="PTHR11246">
    <property type="entry name" value="PRE-MRNA SPLICING FACTOR"/>
    <property type="match status" value="1"/>
</dbReference>
<dbReference type="PANTHER" id="PTHR11246:SF5">
    <property type="entry name" value="PRE-MRNA-SPLICING FACTOR SYF1"/>
    <property type="match status" value="1"/>
</dbReference>
<dbReference type="Pfam" id="PF23231">
    <property type="entry name" value="HAT_Syf1_CNRKL1_C"/>
    <property type="match status" value="1"/>
</dbReference>
<dbReference type="Pfam" id="PF23233">
    <property type="entry name" value="HAT_Syf1_CNRKL1_N"/>
    <property type="match status" value="1"/>
</dbReference>
<dbReference type="Pfam" id="PF23220">
    <property type="entry name" value="HAT_Syf1_M"/>
    <property type="match status" value="1"/>
</dbReference>
<dbReference type="SMART" id="SM00386">
    <property type="entry name" value="HAT"/>
    <property type="match status" value="8"/>
</dbReference>
<dbReference type="SUPFAM" id="SSF48452">
    <property type="entry name" value="TPR-like"/>
    <property type="match status" value="2"/>
</dbReference>
<reference key="1">
    <citation type="journal article" date="1997" name="Nature">
        <title>The nucleotide sequence of Saccharomyces cerevisiae chromosome IV.</title>
        <authorList>
            <person name="Jacq C."/>
            <person name="Alt-Moerbe J."/>
            <person name="Andre B."/>
            <person name="Arnold W."/>
            <person name="Bahr A."/>
            <person name="Ballesta J.P.G."/>
            <person name="Bargues M."/>
            <person name="Baron L."/>
            <person name="Becker A."/>
            <person name="Biteau N."/>
            <person name="Bloecker H."/>
            <person name="Blugeon C."/>
            <person name="Boskovic J."/>
            <person name="Brandt P."/>
            <person name="Brueckner M."/>
            <person name="Buitrago M.J."/>
            <person name="Coster F."/>
            <person name="Delaveau T."/>
            <person name="del Rey F."/>
            <person name="Dujon B."/>
            <person name="Eide L.G."/>
            <person name="Garcia-Cantalejo J.M."/>
            <person name="Goffeau A."/>
            <person name="Gomez-Peris A."/>
            <person name="Granotier C."/>
            <person name="Hanemann V."/>
            <person name="Hankeln T."/>
            <person name="Hoheisel J.D."/>
            <person name="Jaeger W."/>
            <person name="Jimenez A."/>
            <person name="Jonniaux J.-L."/>
            <person name="Kraemer C."/>
            <person name="Kuester H."/>
            <person name="Laamanen P."/>
            <person name="Legros Y."/>
            <person name="Louis E.J."/>
            <person name="Moeller-Rieker S."/>
            <person name="Monnet A."/>
            <person name="Moro M."/>
            <person name="Mueller-Auer S."/>
            <person name="Nussbaumer B."/>
            <person name="Paricio N."/>
            <person name="Paulin L."/>
            <person name="Perea J."/>
            <person name="Perez-Alonso M."/>
            <person name="Perez-Ortin J.E."/>
            <person name="Pohl T.M."/>
            <person name="Prydz H."/>
            <person name="Purnelle B."/>
            <person name="Rasmussen S.W."/>
            <person name="Remacha M.A."/>
            <person name="Revuelta J.L."/>
            <person name="Rieger M."/>
            <person name="Salom D."/>
            <person name="Saluz H.P."/>
            <person name="Saiz J.E."/>
            <person name="Saren A.-M."/>
            <person name="Schaefer M."/>
            <person name="Scharfe M."/>
            <person name="Schmidt E.R."/>
            <person name="Schneider C."/>
            <person name="Scholler P."/>
            <person name="Schwarz S."/>
            <person name="Soler-Mira A."/>
            <person name="Urrestarazu L.A."/>
            <person name="Verhasselt P."/>
            <person name="Vissers S."/>
            <person name="Voet M."/>
            <person name="Volckaert G."/>
            <person name="Wagner G."/>
            <person name="Wambutt R."/>
            <person name="Wedler E."/>
            <person name="Wedler H."/>
            <person name="Woelfl S."/>
            <person name="Harris D.E."/>
            <person name="Bowman S."/>
            <person name="Brown D."/>
            <person name="Churcher C.M."/>
            <person name="Connor R."/>
            <person name="Dedman K."/>
            <person name="Gentles S."/>
            <person name="Hamlin N."/>
            <person name="Hunt S."/>
            <person name="Jones L."/>
            <person name="McDonald S."/>
            <person name="Murphy L.D."/>
            <person name="Niblett D."/>
            <person name="Odell C."/>
            <person name="Oliver K."/>
            <person name="Rajandream M.A."/>
            <person name="Richards C."/>
            <person name="Shore L."/>
            <person name="Walsh S.V."/>
            <person name="Barrell B.G."/>
            <person name="Dietrich F.S."/>
            <person name="Mulligan J.T."/>
            <person name="Allen E."/>
            <person name="Araujo R."/>
            <person name="Aviles E."/>
            <person name="Berno A."/>
            <person name="Carpenter J."/>
            <person name="Chen E."/>
            <person name="Cherry J.M."/>
            <person name="Chung E."/>
            <person name="Duncan M."/>
            <person name="Hunicke-Smith S."/>
            <person name="Hyman R.W."/>
            <person name="Komp C."/>
            <person name="Lashkari D."/>
            <person name="Lew H."/>
            <person name="Lin D."/>
            <person name="Mosedale D."/>
            <person name="Nakahara K."/>
            <person name="Namath A."/>
            <person name="Oefner P."/>
            <person name="Oh C."/>
            <person name="Petel F.X."/>
            <person name="Roberts D."/>
            <person name="Schramm S."/>
            <person name="Schroeder M."/>
            <person name="Shogren T."/>
            <person name="Shroff N."/>
            <person name="Winant A."/>
            <person name="Yelton M.A."/>
            <person name="Botstein D."/>
            <person name="Davis R.W."/>
            <person name="Johnston M."/>
            <person name="Andrews S."/>
            <person name="Brinkman R."/>
            <person name="Cooper J."/>
            <person name="Ding H."/>
            <person name="Du Z."/>
            <person name="Favello A."/>
            <person name="Fulton L."/>
            <person name="Gattung S."/>
            <person name="Greco T."/>
            <person name="Hallsworth K."/>
            <person name="Hawkins J."/>
            <person name="Hillier L.W."/>
            <person name="Jier M."/>
            <person name="Johnson D."/>
            <person name="Johnston L."/>
            <person name="Kirsten J."/>
            <person name="Kucaba T."/>
            <person name="Langston Y."/>
            <person name="Latreille P."/>
            <person name="Le T."/>
            <person name="Mardis E."/>
            <person name="Menezes S."/>
            <person name="Miller N."/>
            <person name="Nhan M."/>
            <person name="Pauley A."/>
            <person name="Peluso D."/>
            <person name="Rifkin L."/>
            <person name="Riles L."/>
            <person name="Taich A."/>
            <person name="Trevaskis E."/>
            <person name="Vignati D."/>
            <person name="Wilcox L."/>
            <person name="Wohldman P."/>
            <person name="Vaudin M."/>
            <person name="Wilson R."/>
            <person name="Waterston R."/>
            <person name="Albermann K."/>
            <person name="Hani J."/>
            <person name="Heumann K."/>
            <person name="Kleine K."/>
            <person name="Mewes H.-W."/>
            <person name="Zollner A."/>
            <person name="Zaccaria P."/>
        </authorList>
    </citation>
    <scope>NUCLEOTIDE SEQUENCE [LARGE SCALE GENOMIC DNA]</scope>
    <source>
        <strain>ATCC 204508 / S288c</strain>
    </source>
</reference>
<reference key="2">
    <citation type="journal article" date="2014" name="G3 (Bethesda)">
        <title>The reference genome sequence of Saccharomyces cerevisiae: Then and now.</title>
        <authorList>
            <person name="Engel S.R."/>
            <person name="Dietrich F.S."/>
            <person name="Fisk D.G."/>
            <person name="Binkley G."/>
            <person name="Balakrishnan R."/>
            <person name="Costanzo M.C."/>
            <person name="Dwight S.S."/>
            <person name="Hitz B.C."/>
            <person name="Karra K."/>
            <person name="Nash R.S."/>
            <person name="Weng S."/>
            <person name="Wong E.D."/>
            <person name="Lloyd P."/>
            <person name="Skrzypek M.S."/>
            <person name="Miyasato S.R."/>
            <person name="Simison M."/>
            <person name="Cherry J.M."/>
        </authorList>
    </citation>
    <scope>GENOME REANNOTATION</scope>
    <source>
        <strain>ATCC 204508 / S288c</strain>
    </source>
</reference>
<reference key="3">
    <citation type="journal article" date="2002" name="Nucleic Acids Res.">
        <title>Functional and physical interactions between components of the Prp19p-associated complex.</title>
        <authorList>
            <person name="Chen C.-H."/>
            <person name="Yu W.-C."/>
            <person name="Tsao T.Y."/>
            <person name="Wang L.-Y."/>
            <person name="Chen H.-R."/>
            <person name="Lin J.-Y."/>
            <person name="Tsai W.-Y."/>
            <person name="Cheng S.-C."/>
        </authorList>
    </citation>
    <scope>PROTEIN SEQUENCE OF 6-23</scope>
    <scope>IDENTIFICATION IN THE PRP19-ASSOCIATED COMPLEX</scope>
</reference>
<reference key="4">
    <citation type="journal article" date="2000" name="Genetics">
        <title>Genetic and physical interactions between factors involved in both cell cycle progression and pre-mRNA splicing in Saccharomyces cerevisiae.</title>
        <authorList>
            <person name="Ben-Yehuda S."/>
            <person name="Dix I."/>
            <person name="Russell C.S."/>
            <person name="McGarvey M."/>
            <person name="Beggs J.D."/>
            <person name="Kupiec M."/>
        </authorList>
    </citation>
    <scope>FUNCTION</scope>
    <scope>INTERACTION WITH CEF1; ISY1; NTC20; PRP22 AND SYF2</scope>
</reference>
<reference key="5">
    <citation type="journal article" date="2000" name="RNA">
        <title>Functional analyses of interacting factors involved in both pre-mRNA splicing and cell cycle progression in Saccharomyces cerevisiae.</title>
        <authorList>
            <person name="Russell C.S."/>
            <person name="Ben-Yehuda S."/>
            <person name="Dix I."/>
            <person name="Kupiec M."/>
            <person name="Beggs J.D."/>
        </authorList>
    </citation>
    <scope>FUNCTION</scope>
    <scope>IDENTIFICATION IN THE SPLICEOSOME</scope>
</reference>
<reference key="6">
    <citation type="journal article" date="2002" name="Mol. Cell. Biol.">
        <title>Proteomics analysis reveals stable multiprotein complexes in both fission and budding yeasts containing Myb-related Cdc5p/Cef1p, novel pre-mRNA splicing factors, and snRNAs.</title>
        <authorList>
            <person name="Ohi M.D."/>
            <person name="Link A.J."/>
            <person name="Ren L."/>
            <person name="Jennings J.L."/>
            <person name="McDonald W.H."/>
            <person name="Gould K.L."/>
        </authorList>
    </citation>
    <scope>IDENTIFICATION IN THE CWC COMPLEX</scope>
    <scope>IDENTIFICATION BY MASS SPECTROMETRY</scope>
</reference>
<reference key="7">
    <citation type="journal article" date="2002" name="RNA">
        <title>Characterization of interactions among the Cef1p-Prp19p-associated splicing complex.</title>
        <authorList>
            <person name="Ohi M.D."/>
            <person name="Gould K.L."/>
        </authorList>
    </citation>
    <scope>INTERACTION WITH CEF1; CLF1; ISY1; NTC20 AND PRP46</scope>
</reference>
<reference key="8">
    <citation type="journal article" date="2003" name="Mol. Cell">
        <title>Assigning function to yeast proteins by integration of technologies.</title>
        <authorList>
            <person name="Hazbun T.R."/>
            <person name="Malmstroem L."/>
            <person name="Anderson S."/>
            <person name="Graczyk B.J."/>
            <person name="Fox B."/>
            <person name="Riffle M."/>
            <person name="Sundin B.A."/>
            <person name="Aranda J.D."/>
            <person name="McDonald W.H."/>
            <person name="Chiu C.-H."/>
            <person name="Snydsman B.E."/>
            <person name="Bradley P."/>
            <person name="Muller E.G.D."/>
            <person name="Fields S."/>
            <person name="Baker D."/>
            <person name="Yates J.R. III"/>
            <person name="Davis T.N."/>
        </authorList>
    </citation>
    <scope>IDENTIFICATION BY MASS SPECTROMETRY</scope>
</reference>
<reference key="9">
    <citation type="journal article" date="2003" name="Nature">
        <title>Global analysis of protein localization in budding yeast.</title>
        <authorList>
            <person name="Huh W.-K."/>
            <person name="Falvo J.V."/>
            <person name="Gerke L.C."/>
            <person name="Carroll A.S."/>
            <person name="Howson R.W."/>
            <person name="Weissman J.S."/>
            <person name="O'Shea E.K."/>
        </authorList>
    </citation>
    <scope>SUBCELLULAR LOCATION [LARGE SCALE ANALYSIS]</scope>
</reference>
<reference key="10">
    <citation type="journal article" date="2003" name="Nature">
        <title>Global analysis of protein expression in yeast.</title>
        <authorList>
            <person name="Ghaemmaghami S."/>
            <person name="Huh W.-K."/>
            <person name="Bower K."/>
            <person name="Howson R.W."/>
            <person name="Belle A."/>
            <person name="Dephoure N."/>
            <person name="O'Shea E.K."/>
            <person name="Weissman J.S."/>
        </authorList>
    </citation>
    <scope>LEVEL OF PROTEIN EXPRESSION [LARGE SCALE ANALYSIS]</scope>
</reference>
<reference key="11">
    <citation type="journal article" date="2012" name="Proc. Natl. Acad. Sci. U.S.A.">
        <title>N-terminal acetylome analyses and functional insights of the N-terminal acetyltransferase NatB.</title>
        <authorList>
            <person name="Van Damme P."/>
            <person name="Lasa M."/>
            <person name="Polevoda B."/>
            <person name="Gazquez C."/>
            <person name="Elosegui-Artola A."/>
            <person name="Kim D.S."/>
            <person name="De Juan-Pardo E."/>
            <person name="Demeyer K."/>
            <person name="Hole K."/>
            <person name="Larrea E."/>
            <person name="Timmerman E."/>
            <person name="Prieto J."/>
            <person name="Arnesen T."/>
            <person name="Sherman F."/>
            <person name="Gevaert K."/>
            <person name="Aldabe R."/>
        </authorList>
    </citation>
    <scope>IDENTIFICATION BY MASS SPECTROMETRY [LARGE SCALE ANALYSIS]</scope>
</reference>
<keyword id="KW-0002">3D-structure</keyword>
<keyword id="KW-0903">Direct protein sequencing</keyword>
<keyword id="KW-0507">mRNA processing</keyword>
<keyword id="KW-0508">mRNA splicing</keyword>
<keyword id="KW-0539">Nucleus</keyword>
<keyword id="KW-1185">Reference proteome</keyword>
<keyword id="KW-0677">Repeat</keyword>
<keyword id="KW-0747">Spliceosome</keyword>
<gene>
    <name type="primary">SYF1</name>
    <name type="synonym">NTC90</name>
    <name type="ordered locus">YDR416W</name>
</gene>
<comment type="function">
    <text evidence="1 2">Involved in pre-mRNA splicing and cell cycle control. As a component of the NTC complex (or PRP19-associated complex), associates to the spliceosome to mediate conformational rearrangement or to stabilize the structure of the spliceosome after U4 snRNA dissociation, which leads to spliceosome maturation.</text>
</comment>
<comment type="subunit">
    <text evidence="1 2 3 4 5">Belongs to the NTC complex (or PRP19-associated complex), composed of at least CEF1, CLF1, ISY1, NTC20, SNT309, SYF1, SYF2, and PRP19. The NTC complex associates with the spliceosome after the release of the U1 and U4 snRNAs and forms the CWC spliceosome subcomplex (or CEF1-associated complex) reminiscent of a late-stage spliceosome composed also of the U2, U5 and U6 snRNAs and at least BUD13, BUD31, BRR2, CDC40, CUS1, CWC2, CWC15, CWC21, CWC22, CWC23, CWC24, CWC25, CWC27, ECM2, HSH155, IST3, LEA1, MSL1, PRP8, PRP9, PRP11, PRP21, PRP22, PRP45, PRP46, SLU7, SMB1, SMD1, SMD2, SMD3, SMX2, SMX3, SNU114, SPP2, RSE1 and YJU2. Interacts with CEF1, CLF1, ISY1, NTC20, PRP22, PRP46 and SYF2.</text>
</comment>
<comment type="interaction">
    <interactant intactId="EBI-540">
        <id>Q04048</id>
    </interactant>
    <interactant intactId="EBI-476">
        <id>Q03654</id>
        <label>CEF1</label>
    </interactant>
    <organismsDiffer>false</organismsDiffer>
    <experiments>6</experiments>
</comment>
<comment type="interaction">
    <interactant intactId="EBI-540">
        <id>Q04048</id>
    </interactant>
    <interactant intactId="EBI-484">
        <id>Q12309</id>
        <label>CLF1</label>
    </interactant>
    <organismsDiffer>false</organismsDiffer>
    <experiments>5</experiments>
</comment>
<comment type="interaction">
    <interactant intactId="EBI-540">
        <id>Q04048</id>
    </interactant>
    <interactant intactId="EBI-9382">
        <id>P21374</id>
        <label>ISY1</label>
    </interactant>
    <organismsDiffer>false</organismsDiffer>
    <experiments>5</experiments>
</comment>
<comment type="interaction">
    <interactant intactId="EBI-540">
        <id>Q04048</id>
    </interactant>
    <interactant intactId="EBI-20921">
        <id>P38302</id>
        <label>NTC20</label>
    </interactant>
    <organismsDiffer>false</organismsDiffer>
    <experiments>7</experiments>
</comment>
<comment type="interaction">
    <interactant intactId="EBI-540">
        <id>Q04048</id>
    </interactant>
    <interactant intactId="EBI-493">
        <id>P32523</id>
        <label>PRP19</label>
    </interactant>
    <organismsDiffer>false</organismsDiffer>
    <experiments>7</experiments>
</comment>
<comment type="interaction">
    <interactant intactId="EBI-540">
        <id>Q04048</id>
    </interactant>
    <interactant intactId="EBI-20640">
        <id>P28004</id>
        <label>PRP45</label>
    </interactant>
    <organismsDiffer>false</organismsDiffer>
    <experiments>4</experiments>
</comment>
<comment type="interaction">
    <interactant intactId="EBI-540">
        <id>Q04048</id>
    </interactant>
    <interactant intactId="EBI-23308">
        <id>P53277</id>
        <label>SYF2</label>
    </interactant>
    <organismsDiffer>false</organismsDiffer>
    <experiments>4</experiments>
</comment>
<comment type="interaction">
    <interactant intactId="EBI-540">
        <id>Q04048</id>
    </interactant>
    <interactant intactId="EBI-26795">
        <id>P28320</id>
        <label>YJU2</label>
    </interactant>
    <organismsDiffer>false</organismsDiffer>
    <experiments>3</experiments>
</comment>
<comment type="subcellular location">
    <subcellularLocation>
        <location evidence="6">Nucleus</location>
    </subcellularLocation>
</comment>
<comment type="miscellaneous">
    <text evidence="7">Present with 2170 molecules/cell in log phase SD medium.</text>
</comment>
<comment type="similarity">
    <text evidence="8">Belongs to the crooked-neck family.</text>
</comment>
<protein>
    <recommendedName>
        <fullName>Pre-mRNA-splicing factor SYF1</fullName>
    </recommendedName>
    <alternativeName>
        <fullName>PRP19-associated complex protein 90</fullName>
    </alternativeName>
    <alternativeName>
        <fullName>Synthetic lethal with CDC40 protein 1</fullName>
    </alternativeName>
</protein>
<feature type="chain" id="PRO_0000205737" description="Pre-mRNA-splicing factor SYF1">
    <location>
        <begin position="1"/>
        <end position="859"/>
    </location>
</feature>
<feature type="repeat" description="HAT 1">
    <location>
        <begin position="17"/>
        <end position="49"/>
    </location>
</feature>
<feature type="repeat" description="HAT 2">
    <location>
        <begin position="52"/>
        <end position="84"/>
    </location>
</feature>
<feature type="repeat" description="HAT 3">
    <location>
        <begin position="88"/>
        <end position="108"/>
    </location>
</feature>
<feature type="repeat" description="HAT 4">
    <location>
        <begin position="123"/>
        <end position="157"/>
    </location>
</feature>
<feature type="repeat" description="HAT 5">
    <location>
        <begin position="177"/>
        <end position="219"/>
    </location>
</feature>
<feature type="repeat" description="HAT 6">
    <location>
        <begin position="238"/>
        <end position="271"/>
    </location>
</feature>
<feature type="repeat" description="HAT 7">
    <location>
        <begin position="427"/>
        <end position="459"/>
    </location>
</feature>
<feature type="repeat" description="HAT 8">
    <location>
        <begin position="461"/>
        <end position="482"/>
    </location>
</feature>
<feature type="repeat" description="HAT 9">
    <location>
        <begin position="520"/>
        <end position="554"/>
    </location>
</feature>
<feature type="repeat" description="HAT 10">
    <location>
        <begin position="599"/>
        <end position="633"/>
    </location>
</feature>
<feature type="repeat" description="HAT 11">
    <location>
        <begin position="639"/>
        <end position="675"/>
    </location>
</feature>
<feature type="repeat" description="HAT 12">
    <location>
        <begin position="685"/>
        <end position="718"/>
    </location>
</feature>
<feature type="repeat" description="HAT 13">
    <location>
        <begin position="720"/>
        <end position="754"/>
    </location>
</feature>
<feature type="repeat" description="HAT 14">
    <location>
        <begin position="756"/>
        <end position="790"/>
    </location>
</feature>
<feature type="helix" evidence="10">
    <location>
        <begin position="22"/>
        <end position="32"/>
    </location>
</feature>
<feature type="helix" evidence="10">
    <location>
        <begin position="37"/>
        <end position="50"/>
    </location>
</feature>
<feature type="helix" evidence="10">
    <location>
        <begin position="54"/>
        <end position="66"/>
    </location>
</feature>
<feature type="turn" evidence="10">
    <location>
        <begin position="67"/>
        <end position="70"/>
    </location>
</feature>
<feature type="helix" evidence="10">
    <location>
        <begin position="73"/>
        <end position="82"/>
    </location>
</feature>
<feature type="helix" evidence="10">
    <location>
        <begin position="92"/>
        <end position="102"/>
    </location>
</feature>
<feature type="helix" evidence="10">
    <location>
        <begin position="110"/>
        <end position="114"/>
    </location>
</feature>
<feature type="helix" evidence="10">
    <location>
        <begin position="116"/>
        <end position="120"/>
    </location>
</feature>
<feature type="helix" evidence="10">
    <location>
        <begin position="125"/>
        <end position="137"/>
    </location>
</feature>
<feature type="helix" evidence="10">
    <location>
        <begin position="146"/>
        <end position="148"/>
    </location>
</feature>
<feature type="helix" evidence="10">
    <location>
        <begin position="150"/>
        <end position="156"/>
    </location>
</feature>
<feature type="turn" evidence="10">
    <location>
        <begin position="157"/>
        <end position="159"/>
    </location>
</feature>
<feature type="helix" evidence="10">
    <location>
        <begin position="160"/>
        <end position="163"/>
    </location>
</feature>
<feature type="helix" evidence="10">
    <location>
        <begin position="179"/>
        <end position="189"/>
    </location>
</feature>
<feature type="helix" evidence="10">
    <location>
        <begin position="210"/>
        <end position="220"/>
    </location>
</feature>
<feature type="helix" evidence="10">
    <location>
        <begin position="227"/>
        <end position="236"/>
    </location>
</feature>
<feature type="helix" evidence="10">
    <location>
        <begin position="240"/>
        <end position="247"/>
    </location>
</feature>
<feature type="helix" evidence="9">
    <location>
        <begin position="251"/>
        <end position="260"/>
    </location>
</feature>
<feature type="helix" evidence="9">
    <location>
        <begin position="261"/>
        <end position="263"/>
    </location>
</feature>
<feature type="helix" evidence="10">
    <location>
        <begin position="268"/>
        <end position="281"/>
    </location>
</feature>
<feature type="helix" evidence="10">
    <location>
        <begin position="284"/>
        <end position="297"/>
    </location>
</feature>
<feature type="helix" evidence="10">
    <location>
        <begin position="302"/>
        <end position="315"/>
    </location>
</feature>
<feature type="helix" evidence="10">
    <location>
        <begin position="319"/>
        <end position="332"/>
    </location>
</feature>
<feature type="helix" evidence="10">
    <location>
        <begin position="336"/>
        <end position="358"/>
    </location>
</feature>
<feature type="helix" evidence="10">
    <location>
        <begin position="375"/>
        <end position="390"/>
    </location>
</feature>
<feature type="helix" evidence="10">
    <location>
        <begin position="392"/>
        <end position="403"/>
    </location>
</feature>
<feature type="helix" evidence="10">
    <location>
        <begin position="408"/>
        <end position="417"/>
    </location>
</feature>
<feature type="helix" evidence="10">
    <location>
        <begin position="421"/>
        <end position="434"/>
    </location>
</feature>
<feature type="helix" evidence="10">
    <location>
        <begin position="437"/>
        <end position="439"/>
    </location>
</feature>
<feature type="helix" evidence="10">
    <location>
        <begin position="446"/>
        <end position="460"/>
    </location>
</feature>
<feature type="helix" evidence="10">
    <location>
        <begin position="463"/>
        <end position="473"/>
    </location>
</feature>
<feature type="strand" evidence="10">
    <location>
        <begin position="479"/>
        <end position="481"/>
    </location>
</feature>
<feature type="helix" evidence="10">
    <location>
        <begin position="482"/>
        <end position="511"/>
    </location>
</feature>
<feature type="helix" evidence="10">
    <location>
        <begin position="518"/>
        <end position="526"/>
    </location>
</feature>
<feature type="turn" evidence="10">
    <location>
        <begin position="527"/>
        <end position="530"/>
    </location>
</feature>
<feature type="turn" evidence="10">
    <location>
        <begin position="534"/>
        <end position="537"/>
    </location>
</feature>
<feature type="helix" evidence="10">
    <location>
        <begin position="538"/>
        <end position="540"/>
    </location>
</feature>
<feature type="helix" evidence="10">
    <location>
        <begin position="542"/>
        <end position="555"/>
    </location>
</feature>
<feature type="turn" evidence="9">
    <location>
        <begin position="561"/>
        <end position="563"/>
    </location>
</feature>
<feature type="helix" evidence="10">
    <location>
        <begin position="565"/>
        <end position="579"/>
    </location>
</feature>
<feature type="helix" evidence="10">
    <location>
        <begin position="585"/>
        <end position="597"/>
    </location>
</feature>
<feature type="helix" evidence="10">
    <location>
        <begin position="601"/>
        <end position="611"/>
    </location>
</feature>
<feature type="helix" evidence="10">
    <location>
        <begin position="612"/>
        <end position="614"/>
    </location>
</feature>
<feature type="helix" evidence="10">
    <location>
        <begin position="617"/>
        <end position="632"/>
    </location>
</feature>
<feature type="helix" evidence="10">
    <location>
        <begin position="641"/>
        <end position="656"/>
    </location>
</feature>
<feature type="turn" evidence="10">
    <location>
        <begin position="657"/>
        <end position="659"/>
    </location>
</feature>
<feature type="helix" evidence="10">
    <location>
        <begin position="663"/>
        <end position="676"/>
    </location>
</feature>
<feature type="helix" evidence="10">
    <location>
        <begin position="680"/>
        <end position="692"/>
    </location>
</feature>
<feature type="helix" evidence="10">
    <location>
        <begin position="702"/>
        <end position="719"/>
    </location>
</feature>
<feature type="helix" evidence="10">
    <location>
        <begin position="722"/>
        <end position="735"/>
    </location>
</feature>
<feature type="turn" evidence="10">
    <location>
        <begin position="738"/>
        <end position="740"/>
    </location>
</feature>
<feature type="helix" evidence="10">
    <location>
        <begin position="741"/>
        <end position="755"/>
    </location>
</feature>
<feature type="helix" evidence="10">
    <location>
        <begin position="758"/>
        <end position="769"/>
    </location>
</feature>
<feature type="helix" evidence="10">
    <location>
        <begin position="774"/>
        <end position="776"/>
    </location>
</feature>
<feature type="helix" evidence="10">
    <location>
        <begin position="778"/>
        <end position="791"/>
    </location>
</feature>
<feature type="helix" evidence="10">
    <location>
        <begin position="794"/>
        <end position="808"/>
    </location>
</feature>